<gene>
    <name type="primary">NFYB10</name>
    <name type="ordered locus">At3g53340</name>
    <name type="ORF">F4P12_40</name>
</gene>
<keyword id="KW-0007">Acetylation</keyword>
<keyword id="KW-0010">Activator</keyword>
<keyword id="KW-0238">DNA-binding</keyword>
<keyword id="KW-0539">Nucleus</keyword>
<keyword id="KW-1185">Reference proteome</keyword>
<keyword id="KW-0804">Transcription</keyword>
<keyword id="KW-0805">Transcription regulation</keyword>
<feature type="initiator methionine" description="Removed" evidence="2">
    <location>
        <position position="1"/>
    </location>
</feature>
<feature type="chain" id="PRO_0000204624" description="Nuclear transcription factor Y subunit B-10">
    <location>
        <begin position="2"/>
        <end position="176"/>
    </location>
</feature>
<feature type="DNA-binding region" evidence="1">
    <location>
        <begin position="34"/>
        <end position="40"/>
    </location>
</feature>
<feature type="region of interest" description="Disordered" evidence="3">
    <location>
        <begin position="1"/>
        <end position="29"/>
    </location>
</feature>
<feature type="region of interest" description="Subunit association domain (SAD)" evidence="1">
    <location>
        <begin position="61"/>
        <end position="72"/>
    </location>
</feature>
<feature type="region of interest" description="Disordered" evidence="3">
    <location>
        <begin position="121"/>
        <end position="176"/>
    </location>
</feature>
<feature type="compositionally biased region" description="Gly residues" evidence="3">
    <location>
        <begin position="1"/>
        <end position="15"/>
    </location>
</feature>
<feature type="compositionally biased region" description="Low complexity" evidence="3">
    <location>
        <begin position="139"/>
        <end position="159"/>
    </location>
</feature>
<feature type="compositionally biased region" description="Polar residues" evidence="3">
    <location>
        <begin position="160"/>
        <end position="169"/>
    </location>
</feature>
<feature type="modified residue" description="N-acetylalanine" evidence="2">
    <location>
        <position position="2"/>
    </location>
</feature>
<comment type="function">
    <text>Component of the NF-Y/HAP transcription factor complex. The NF-Y complex stimulates the transcription of various genes by recognizing and binding to a CCAAT motif in promoters.</text>
</comment>
<comment type="subunit">
    <text evidence="1">Heterotrimeric transcription factor composed of three components, NF-YA, NF-YB and NF-YC. NF-YB and NF-YC must interact and dimerize for NF-YA association and DNA binding (By similarity).</text>
</comment>
<comment type="interaction">
    <interactant intactId="EBI-2475824">
        <id>Q67XJ2</id>
    </interactant>
    <interactant intactId="EBI-15191737">
        <id>Q58CM8</id>
        <label>NFYC10</label>
    </interactant>
    <organismsDiffer>false</organismsDiffer>
    <experiments>3</experiments>
</comment>
<comment type="interaction">
    <interactant intactId="EBI-2475824">
        <id>Q67XJ2</id>
    </interactant>
    <interactant intactId="EBI-2466133">
        <id>Q9FGP8</id>
        <label>NFYC7</label>
    </interactant>
    <organismsDiffer>false</organismsDiffer>
    <experiments>3</experiments>
</comment>
<comment type="interaction">
    <interactant intactId="EBI-2475824">
        <id>Q67XJ2</id>
    </interactant>
    <interactant intactId="EBI-15191571">
        <id>Q4PSE2</id>
        <label>NFYC8</label>
    </interactant>
    <organismsDiffer>false</organismsDiffer>
    <experiments>3</experiments>
</comment>
<comment type="interaction">
    <interactant intactId="EBI-2475824">
        <id>Q67XJ2</id>
    </interactant>
    <interactant intactId="EBI-2466050">
        <id>Q8L4B2</id>
        <label>NFYC9</label>
    </interactant>
    <organismsDiffer>false</organismsDiffer>
    <experiments>3</experiments>
</comment>
<comment type="subcellular location">
    <subcellularLocation>
        <location evidence="5">Nucleus</location>
    </subcellularLocation>
</comment>
<comment type="tissue specificity">
    <text evidence="4">Expressed in the whole plant, except roots.</text>
</comment>
<comment type="similarity">
    <text evidence="5">Belongs to the NFYB/HAP3 subunit family.</text>
</comment>
<comment type="sequence caution" evidence="5">
    <conflict type="erroneous gene model prediction">
        <sequence resource="EMBL-CDS" id="CAB67641"/>
    </conflict>
</comment>
<proteinExistence type="evidence at protein level"/>
<dbReference type="EMBL" id="AL132966">
    <property type="protein sequence ID" value="CAB67641.1"/>
    <property type="status" value="ALT_SEQ"/>
    <property type="molecule type" value="Genomic_DNA"/>
</dbReference>
<dbReference type="EMBL" id="CP002686">
    <property type="protein sequence ID" value="AEE79070.1"/>
    <property type="molecule type" value="Genomic_DNA"/>
</dbReference>
<dbReference type="EMBL" id="CP002686">
    <property type="protein sequence ID" value="ANM65605.1"/>
    <property type="molecule type" value="Genomic_DNA"/>
</dbReference>
<dbReference type="EMBL" id="AK176827">
    <property type="protein sequence ID" value="BAD44590.1"/>
    <property type="molecule type" value="mRNA"/>
</dbReference>
<dbReference type="PIR" id="T45874">
    <property type="entry name" value="T45874"/>
</dbReference>
<dbReference type="SMR" id="Q67XJ2"/>
<dbReference type="BioGRID" id="9819">
    <property type="interactions" value="22"/>
</dbReference>
<dbReference type="FunCoup" id="Q67XJ2">
    <property type="interactions" value="3364"/>
</dbReference>
<dbReference type="IntAct" id="Q67XJ2">
    <property type="interactions" value="18"/>
</dbReference>
<dbReference type="STRING" id="3702.Q67XJ2"/>
<dbReference type="PaxDb" id="3702-AT3G53340.1"/>
<dbReference type="ProteomicsDB" id="251058"/>
<dbReference type="EnsemblPlants" id="AT3G53340.1">
    <property type="protein sequence ID" value="AT3G53340.1"/>
    <property type="gene ID" value="AT3G53340"/>
</dbReference>
<dbReference type="EnsemblPlants" id="AT3G53340.5">
    <property type="protein sequence ID" value="AT3G53340.5"/>
    <property type="gene ID" value="AT3G53340"/>
</dbReference>
<dbReference type="Gramene" id="AT3G53340.1">
    <property type="protein sequence ID" value="AT3G53340.1"/>
    <property type="gene ID" value="AT3G53340"/>
</dbReference>
<dbReference type="Gramene" id="AT3G53340.5">
    <property type="protein sequence ID" value="AT3G53340.5"/>
    <property type="gene ID" value="AT3G53340"/>
</dbReference>
<dbReference type="KEGG" id="ath:AT3G53340"/>
<dbReference type="Araport" id="AT3G53340"/>
<dbReference type="TAIR" id="AT3G53340">
    <property type="gene designation" value="NF-YB10"/>
</dbReference>
<dbReference type="eggNOG" id="KOG0869">
    <property type="taxonomic scope" value="Eukaryota"/>
</dbReference>
<dbReference type="HOGENOM" id="CLU_066247_13_1_1"/>
<dbReference type="InParanoid" id="Q67XJ2"/>
<dbReference type="PhylomeDB" id="Q67XJ2"/>
<dbReference type="PRO" id="PR:Q67XJ2"/>
<dbReference type="Proteomes" id="UP000006548">
    <property type="component" value="Chromosome 3"/>
</dbReference>
<dbReference type="ExpressionAtlas" id="Q67XJ2">
    <property type="expression patterns" value="baseline and differential"/>
</dbReference>
<dbReference type="GO" id="GO:0016602">
    <property type="term" value="C:CCAAT-binding factor complex"/>
    <property type="evidence" value="ECO:0007669"/>
    <property type="project" value="InterPro"/>
</dbReference>
<dbReference type="GO" id="GO:0001228">
    <property type="term" value="F:DNA-binding transcription activator activity, RNA polymerase II-specific"/>
    <property type="evidence" value="ECO:0007669"/>
    <property type="project" value="InterPro"/>
</dbReference>
<dbReference type="GO" id="GO:0003700">
    <property type="term" value="F:DNA-binding transcription factor activity"/>
    <property type="evidence" value="ECO:0000250"/>
    <property type="project" value="TAIR"/>
</dbReference>
<dbReference type="GO" id="GO:0046982">
    <property type="term" value="F:protein heterodimerization activity"/>
    <property type="evidence" value="ECO:0007669"/>
    <property type="project" value="InterPro"/>
</dbReference>
<dbReference type="GO" id="GO:0000976">
    <property type="term" value="F:transcription cis-regulatory region binding"/>
    <property type="evidence" value="ECO:0000353"/>
    <property type="project" value="TAIR"/>
</dbReference>
<dbReference type="GO" id="GO:0019760">
    <property type="term" value="P:glucosinolate metabolic process"/>
    <property type="evidence" value="ECO:0000315"/>
    <property type="project" value="TAIR"/>
</dbReference>
<dbReference type="CDD" id="cd22907">
    <property type="entry name" value="HFD_NFYB"/>
    <property type="match status" value="1"/>
</dbReference>
<dbReference type="FunFam" id="1.10.20.10:FF:000035">
    <property type="entry name" value="Nuclear transcription factor Y subunit B-3"/>
    <property type="match status" value="1"/>
</dbReference>
<dbReference type="Gene3D" id="1.10.20.10">
    <property type="entry name" value="Histone, subunit A"/>
    <property type="match status" value="1"/>
</dbReference>
<dbReference type="InterPro" id="IPR003958">
    <property type="entry name" value="CBFA_NFYB_domain"/>
</dbReference>
<dbReference type="InterPro" id="IPR009072">
    <property type="entry name" value="Histone-fold"/>
</dbReference>
<dbReference type="InterPro" id="IPR027113">
    <property type="entry name" value="Transc_fact_NFYB/HAP3"/>
</dbReference>
<dbReference type="InterPro" id="IPR003956">
    <property type="entry name" value="Transcrpt_fac_NFYB/HAP3_CS"/>
</dbReference>
<dbReference type="PANTHER" id="PTHR11064">
    <property type="entry name" value="CCAAT-BINDING TRANSCRIPTION FACTOR-RELATED"/>
    <property type="match status" value="1"/>
</dbReference>
<dbReference type="PANTHER" id="PTHR11064:SF192">
    <property type="entry name" value="NUCLEAR TRANSCRIPTION FACTOR Y SUBUNIT B-10"/>
    <property type="match status" value="1"/>
</dbReference>
<dbReference type="Pfam" id="PF00808">
    <property type="entry name" value="CBFD_NFYB_HMF"/>
    <property type="match status" value="1"/>
</dbReference>
<dbReference type="PRINTS" id="PR00615">
    <property type="entry name" value="CCAATSUBUNTA"/>
</dbReference>
<dbReference type="SUPFAM" id="SSF47113">
    <property type="entry name" value="Histone-fold"/>
    <property type="match status" value="1"/>
</dbReference>
<dbReference type="PROSITE" id="PS00685">
    <property type="entry name" value="NFYB_HAP3"/>
    <property type="match status" value="1"/>
</dbReference>
<protein>
    <recommendedName>
        <fullName>Nuclear transcription factor Y subunit B-10</fullName>
        <shortName>AtNF-YB-10</shortName>
    </recommendedName>
</protein>
<name>NFYBA_ARATH</name>
<organism>
    <name type="scientific">Arabidopsis thaliana</name>
    <name type="common">Mouse-ear cress</name>
    <dbReference type="NCBI Taxonomy" id="3702"/>
    <lineage>
        <taxon>Eukaryota</taxon>
        <taxon>Viridiplantae</taxon>
        <taxon>Streptophyta</taxon>
        <taxon>Embryophyta</taxon>
        <taxon>Tracheophyta</taxon>
        <taxon>Spermatophyta</taxon>
        <taxon>Magnoliopsida</taxon>
        <taxon>eudicotyledons</taxon>
        <taxon>Gunneridae</taxon>
        <taxon>Pentapetalae</taxon>
        <taxon>rosids</taxon>
        <taxon>malvids</taxon>
        <taxon>Brassicales</taxon>
        <taxon>Brassicaceae</taxon>
        <taxon>Camelineae</taxon>
        <taxon>Arabidopsis</taxon>
    </lineage>
</organism>
<reference key="1">
    <citation type="journal article" date="2000" name="Nature">
        <title>Sequence and analysis of chromosome 3 of the plant Arabidopsis thaliana.</title>
        <authorList>
            <person name="Salanoubat M."/>
            <person name="Lemcke K."/>
            <person name="Rieger M."/>
            <person name="Ansorge W."/>
            <person name="Unseld M."/>
            <person name="Fartmann B."/>
            <person name="Valle G."/>
            <person name="Bloecker H."/>
            <person name="Perez-Alonso M."/>
            <person name="Obermaier B."/>
            <person name="Delseny M."/>
            <person name="Boutry M."/>
            <person name="Grivell L.A."/>
            <person name="Mache R."/>
            <person name="Puigdomenech P."/>
            <person name="De Simone V."/>
            <person name="Choisne N."/>
            <person name="Artiguenave F."/>
            <person name="Robert C."/>
            <person name="Brottier P."/>
            <person name="Wincker P."/>
            <person name="Cattolico L."/>
            <person name="Weissenbach J."/>
            <person name="Saurin W."/>
            <person name="Quetier F."/>
            <person name="Schaefer M."/>
            <person name="Mueller-Auer S."/>
            <person name="Gabel C."/>
            <person name="Fuchs M."/>
            <person name="Benes V."/>
            <person name="Wurmbach E."/>
            <person name="Drzonek H."/>
            <person name="Erfle H."/>
            <person name="Jordan N."/>
            <person name="Bangert S."/>
            <person name="Wiedelmann R."/>
            <person name="Kranz H."/>
            <person name="Voss H."/>
            <person name="Holland R."/>
            <person name="Brandt P."/>
            <person name="Nyakatura G."/>
            <person name="Vezzi A."/>
            <person name="D'Angelo M."/>
            <person name="Pallavicini A."/>
            <person name="Toppo S."/>
            <person name="Simionati B."/>
            <person name="Conrad A."/>
            <person name="Hornischer K."/>
            <person name="Kauer G."/>
            <person name="Loehnert T.-H."/>
            <person name="Nordsiek G."/>
            <person name="Reichelt J."/>
            <person name="Scharfe M."/>
            <person name="Schoen O."/>
            <person name="Bargues M."/>
            <person name="Terol J."/>
            <person name="Climent J."/>
            <person name="Navarro P."/>
            <person name="Collado C."/>
            <person name="Perez-Perez A."/>
            <person name="Ottenwaelder B."/>
            <person name="Duchemin D."/>
            <person name="Cooke R."/>
            <person name="Laudie M."/>
            <person name="Berger-Llauro C."/>
            <person name="Purnelle B."/>
            <person name="Masuy D."/>
            <person name="de Haan M."/>
            <person name="Maarse A.C."/>
            <person name="Alcaraz J.-P."/>
            <person name="Cottet A."/>
            <person name="Casacuberta E."/>
            <person name="Monfort A."/>
            <person name="Argiriou A."/>
            <person name="Flores M."/>
            <person name="Liguori R."/>
            <person name="Vitale D."/>
            <person name="Mannhaupt G."/>
            <person name="Haase D."/>
            <person name="Schoof H."/>
            <person name="Rudd S."/>
            <person name="Zaccaria P."/>
            <person name="Mewes H.-W."/>
            <person name="Mayer K.F.X."/>
            <person name="Kaul S."/>
            <person name="Town C.D."/>
            <person name="Koo H.L."/>
            <person name="Tallon L.J."/>
            <person name="Jenkins J."/>
            <person name="Rooney T."/>
            <person name="Rizzo M."/>
            <person name="Walts A."/>
            <person name="Utterback T."/>
            <person name="Fujii C.Y."/>
            <person name="Shea T.P."/>
            <person name="Creasy T.H."/>
            <person name="Haas B."/>
            <person name="Maiti R."/>
            <person name="Wu D."/>
            <person name="Peterson J."/>
            <person name="Van Aken S."/>
            <person name="Pai G."/>
            <person name="Militscher J."/>
            <person name="Sellers P."/>
            <person name="Gill J.E."/>
            <person name="Feldblyum T.V."/>
            <person name="Preuss D."/>
            <person name="Lin X."/>
            <person name="Nierman W.C."/>
            <person name="Salzberg S.L."/>
            <person name="White O."/>
            <person name="Venter J.C."/>
            <person name="Fraser C.M."/>
            <person name="Kaneko T."/>
            <person name="Nakamura Y."/>
            <person name="Sato S."/>
            <person name="Kato T."/>
            <person name="Asamizu E."/>
            <person name="Sasamoto S."/>
            <person name="Kimura T."/>
            <person name="Idesawa K."/>
            <person name="Kawashima K."/>
            <person name="Kishida Y."/>
            <person name="Kiyokawa C."/>
            <person name="Kohara M."/>
            <person name="Matsumoto M."/>
            <person name="Matsuno A."/>
            <person name="Muraki A."/>
            <person name="Nakayama S."/>
            <person name="Nakazaki N."/>
            <person name="Shinpo S."/>
            <person name="Takeuchi C."/>
            <person name="Wada T."/>
            <person name="Watanabe A."/>
            <person name="Yamada M."/>
            <person name="Yasuda M."/>
            <person name="Tabata S."/>
        </authorList>
    </citation>
    <scope>NUCLEOTIDE SEQUENCE [LARGE SCALE GENOMIC DNA]</scope>
    <source>
        <strain>cv. Columbia</strain>
    </source>
</reference>
<reference key="2">
    <citation type="journal article" date="2017" name="Plant J.">
        <title>Araport11: a complete reannotation of the Arabidopsis thaliana reference genome.</title>
        <authorList>
            <person name="Cheng C.Y."/>
            <person name="Krishnakumar V."/>
            <person name="Chan A.P."/>
            <person name="Thibaud-Nissen F."/>
            <person name="Schobel S."/>
            <person name="Town C.D."/>
        </authorList>
    </citation>
    <scope>GENOME REANNOTATION</scope>
    <source>
        <strain>cv. Columbia</strain>
    </source>
</reference>
<reference key="3">
    <citation type="submission" date="2004-09" db="EMBL/GenBank/DDBJ databases">
        <title>Large-scale analysis of RIKEN Arabidopsis full-length (RAFL) cDNAs.</title>
        <authorList>
            <person name="Totoki Y."/>
            <person name="Seki M."/>
            <person name="Ishida J."/>
            <person name="Nakajima M."/>
            <person name="Enju A."/>
            <person name="Kamiya A."/>
            <person name="Narusaka M."/>
            <person name="Shin-i T."/>
            <person name="Nakagawa M."/>
            <person name="Sakamoto N."/>
            <person name="Oishi K."/>
            <person name="Kohara Y."/>
            <person name="Kobayashi M."/>
            <person name="Toyoda A."/>
            <person name="Sakaki Y."/>
            <person name="Sakurai T."/>
            <person name="Iida K."/>
            <person name="Akiyama K."/>
            <person name="Satou M."/>
            <person name="Toyoda T."/>
            <person name="Konagaya A."/>
            <person name="Carninci P."/>
            <person name="Kawai J."/>
            <person name="Hayashizaki Y."/>
            <person name="Shinozaki K."/>
        </authorList>
    </citation>
    <scope>NUCLEOTIDE SEQUENCE [LARGE SCALE MRNA]</scope>
    <source>
        <strain>cv. Columbia</strain>
    </source>
</reference>
<reference key="4">
    <citation type="journal article" date="2002" name="Gene">
        <title>Regulation of novel members of the Arabidopsis thaliana CCAAT-binding nuclear factor Y subunits.</title>
        <authorList>
            <person name="Gusmaroli G."/>
            <person name="Tonelli C."/>
            <person name="Mantovani R."/>
        </authorList>
    </citation>
    <scope>GENE FAMILY</scope>
    <scope>NOMENCLATURE</scope>
    <scope>TISSUE SPECIFICITY</scope>
</reference>
<evidence type="ECO:0000250" key="1"/>
<evidence type="ECO:0000250" key="2">
    <source>
        <dbReference type="UniProtKB" id="Q9SLG0"/>
    </source>
</evidence>
<evidence type="ECO:0000256" key="3">
    <source>
        <dbReference type="SAM" id="MobiDB-lite"/>
    </source>
</evidence>
<evidence type="ECO:0000269" key="4">
    <source>
    </source>
</evidence>
<evidence type="ECO:0000305" key="5"/>
<sequence>MAESQTGGGGGGSHESGGDQSPRSLNVREQDRFLPIANISRIMKRGLPLNGKIAKDAKETMQECVSEFISFVTSEASDKCQREKRKTINGDDLLWAMATLGFEDYIDPLKVYLMRYREMEGDTKGSGKGGESSAKRDGQPSQVSQFSQVPQQGSFSQGPYGNSQGSNMMVQMPGTE</sequence>
<accession>Q67XJ2</accession>
<accession>Q9LFI3</accession>